<comment type="function">
    <text evidence="1">Involved in the processing of the 20S pre-rRNA.</text>
</comment>
<comment type="subcellular location">
    <subcellularLocation>
        <location>Nucleus</location>
        <location>Nucleolus</location>
    </subcellularLocation>
</comment>
<comment type="similarity">
    <text evidence="4">Belongs to the FYV7 family.</text>
</comment>
<accession>Q75CZ6</accession>
<gene>
    <name type="primary">FYV7</name>
    <name type="ordered locus">ABR226W</name>
</gene>
<name>FYV7_EREGS</name>
<feature type="chain" id="PRO_0000087398" description="rRNA-processing protein FYV7">
    <location>
        <begin position="1"/>
        <end position="140"/>
    </location>
</feature>
<feature type="region of interest" description="Disordered" evidence="3">
    <location>
        <begin position="36"/>
        <end position="140"/>
    </location>
</feature>
<feature type="coiled-coil region" evidence="2">
    <location>
        <begin position="59"/>
        <end position="112"/>
    </location>
</feature>
<feature type="compositionally biased region" description="Basic and acidic residues" evidence="3">
    <location>
        <begin position="44"/>
        <end position="69"/>
    </location>
</feature>
<feature type="compositionally biased region" description="Basic and acidic residues" evidence="3">
    <location>
        <begin position="77"/>
        <end position="105"/>
    </location>
</feature>
<organism>
    <name type="scientific">Eremothecium gossypii (strain ATCC 10895 / CBS 109.51 / FGSC 9923 / NRRL Y-1056)</name>
    <name type="common">Yeast</name>
    <name type="synonym">Ashbya gossypii</name>
    <dbReference type="NCBI Taxonomy" id="284811"/>
    <lineage>
        <taxon>Eukaryota</taxon>
        <taxon>Fungi</taxon>
        <taxon>Dikarya</taxon>
        <taxon>Ascomycota</taxon>
        <taxon>Saccharomycotina</taxon>
        <taxon>Saccharomycetes</taxon>
        <taxon>Saccharomycetales</taxon>
        <taxon>Saccharomycetaceae</taxon>
        <taxon>Eremothecium</taxon>
    </lineage>
</organism>
<proteinExistence type="inferred from homology"/>
<protein>
    <recommendedName>
        <fullName>rRNA-processing protein FYV7</fullName>
    </recommendedName>
</protein>
<dbReference type="EMBL" id="AE016815">
    <property type="protein sequence ID" value="AAS50999.1"/>
    <property type="molecule type" value="Genomic_DNA"/>
</dbReference>
<dbReference type="RefSeq" id="NP_983175.1">
    <property type="nucleotide sequence ID" value="NM_208528.1"/>
</dbReference>
<dbReference type="SMR" id="Q75CZ6"/>
<dbReference type="FunCoup" id="Q75CZ6">
    <property type="interactions" value="112"/>
</dbReference>
<dbReference type="STRING" id="284811.Q75CZ6"/>
<dbReference type="EnsemblFungi" id="AAS50999">
    <property type="protein sequence ID" value="AAS50999"/>
    <property type="gene ID" value="AGOS_ABR226W"/>
</dbReference>
<dbReference type="GeneID" id="4619285"/>
<dbReference type="KEGG" id="ago:AGOS_ABR226W"/>
<dbReference type="eggNOG" id="KOG4851">
    <property type="taxonomic scope" value="Eukaryota"/>
</dbReference>
<dbReference type="HOGENOM" id="CLU_105541_0_0_1"/>
<dbReference type="InParanoid" id="Q75CZ6"/>
<dbReference type="OMA" id="MGPKIDD"/>
<dbReference type="OrthoDB" id="2135053at2759"/>
<dbReference type="Proteomes" id="UP000000591">
    <property type="component" value="Chromosome II"/>
</dbReference>
<dbReference type="GO" id="GO:0005730">
    <property type="term" value="C:nucleolus"/>
    <property type="evidence" value="ECO:0007669"/>
    <property type="project" value="UniProtKB-SubCell"/>
</dbReference>
<dbReference type="GO" id="GO:0032040">
    <property type="term" value="C:small-subunit processome"/>
    <property type="evidence" value="ECO:0007669"/>
    <property type="project" value="EnsemblFungi"/>
</dbReference>
<dbReference type="GO" id="GO:0000462">
    <property type="term" value="P:maturation of SSU-rRNA from tricistronic rRNA transcript (SSU-rRNA, 5.8S rRNA, LSU-rRNA)"/>
    <property type="evidence" value="ECO:0007669"/>
    <property type="project" value="EnsemblFungi"/>
</dbReference>
<dbReference type="InterPro" id="IPR013730">
    <property type="entry name" value="Fyv7/TAP26"/>
</dbReference>
<dbReference type="InterPro" id="IPR017265">
    <property type="entry name" value="Fyv7_fungi"/>
</dbReference>
<dbReference type="Pfam" id="PF08524">
    <property type="entry name" value="rRNA_processing"/>
    <property type="match status" value="1"/>
</dbReference>
<dbReference type="PIRSF" id="PIRSF037708">
    <property type="entry name" value="rRNA_proc_FYV7"/>
    <property type="match status" value="1"/>
</dbReference>
<reference key="1">
    <citation type="journal article" date="2004" name="Science">
        <title>The Ashbya gossypii genome as a tool for mapping the ancient Saccharomyces cerevisiae genome.</title>
        <authorList>
            <person name="Dietrich F.S."/>
            <person name="Voegeli S."/>
            <person name="Brachat S."/>
            <person name="Lerch A."/>
            <person name="Gates K."/>
            <person name="Steiner S."/>
            <person name="Mohr C."/>
            <person name="Poehlmann R."/>
            <person name="Luedi P."/>
            <person name="Choi S."/>
            <person name="Wing R.A."/>
            <person name="Flavier A."/>
            <person name="Gaffney T.D."/>
            <person name="Philippsen P."/>
        </authorList>
    </citation>
    <scope>NUCLEOTIDE SEQUENCE [LARGE SCALE GENOMIC DNA]</scope>
    <source>
        <strain>ATCC 10895 / CBS 109.51 / FGSC 9923 / NRRL Y-1056</strain>
    </source>
</reference>
<reference key="2">
    <citation type="journal article" date="2013" name="G3 (Bethesda)">
        <title>Genomes of Ashbya fungi isolated from insects reveal four mating-type loci, numerous translocations, lack of transposons, and distinct gene duplications.</title>
        <authorList>
            <person name="Dietrich F.S."/>
            <person name="Voegeli S."/>
            <person name="Kuo S."/>
            <person name="Philippsen P."/>
        </authorList>
    </citation>
    <scope>GENOME REANNOTATION</scope>
    <source>
        <strain>ATCC 10895 / CBS 109.51 / FGSC 9923 / NRRL Y-1056</strain>
    </source>
</reference>
<evidence type="ECO:0000250" key="1"/>
<evidence type="ECO:0000255" key="2"/>
<evidence type="ECO:0000256" key="3">
    <source>
        <dbReference type="SAM" id="MobiDB-lite"/>
    </source>
</evidence>
<evidence type="ECO:0000305" key="4"/>
<sequence length="140" mass="17086">MVGVGKKFTKESKVREIQKNLHKRAKLKRQYLKTLEQEGYEVPEEQKRQKPSFEQRKGEKKQKVDEKKEHARRRKREQKEEMEAKRQRELDELERAKVRQVERERRNKRIQQKTRSGQPKMGPRINDLLDKIQKDTTYTS</sequence>
<keyword id="KW-0175">Coiled coil</keyword>
<keyword id="KW-0539">Nucleus</keyword>
<keyword id="KW-1185">Reference proteome</keyword>
<keyword id="KW-0698">rRNA processing</keyword>